<feature type="chain" id="PRO_0000195518" description="ATP synthase F(0) complex subunit 8">
    <location>
        <begin position="1"/>
        <end position="67"/>
    </location>
</feature>
<feature type="transmembrane region" description="Helical" evidence="4">
    <location>
        <begin position="8"/>
        <end position="24"/>
    </location>
</feature>
<feature type="modified residue" description="N6-acetyllysine; alternate" evidence="2">
    <location>
        <position position="54"/>
    </location>
</feature>
<feature type="modified residue" description="N6-succinyllysine; alternate" evidence="2">
    <location>
        <position position="54"/>
    </location>
</feature>
<feature type="modified residue" description="N6-acetyllysine" evidence="2">
    <location>
        <position position="57"/>
    </location>
</feature>
<keyword id="KW-0007">Acetylation</keyword>
<keyword id="KW-0066">ATP synthesis</keyword>
<keyword id="KW-0138">CF(0)</keyword>
<keyword id="KW-0375">Hydrogen ion transport</keyword>
<keyword id="KW-0406">Ion transport</keyword>
<keyword id="KW-0472">Membrane</keyword>
<keyword id="KW-0496">Mitochondrion</keyword>
<keyword id="KW-0812">Transmembrane</keyword>
<keyword id="KW-1133">Transmembrane helix</keyword>
<keyword id="KW-0813">Transport</keyword>
<reference key="1">
    <citation type="journal article" date="1997" name="Mol. Biol. Evol.">
        <title>Phylogenetic analyses of mitochondrial DNA suggest a sister group relationship between Xenarthra (Edentata) and Ferungulates.</title>
        <authorList>
            <person name="Arnason U."/>
            <person name="Gullberg A."/>
            <person name="Janke A."/>
        </authorList>
    </citation>
    <scope>NUCLEOTIDE SEQUENCE [GENOMIC DNA]</scope>
</reference>
<sequence>MPQLDTSTWFITIVSMLLSLFILMQLKFIKFSSFSTPCPTTMEKTKHLTPWEMKWTKTYLPHSLPLP</sequence>
<accession>O21329</accession>
<dbReference type="EMBL" id="Y11832">
    <property type="protein sequence ID" value="CAA72527.1"/>
    <property type="molecule type" value="Genomic_DNA"/>
</dbReference>
<dbReference type="PIR" id="T11445">
    <property type="entry name" value="T11445"/>
</dbReference>
<dbReference type="RefSeq" id="NP_007463.1">
    <property type="nucleotide sequence ID" value="NC_001821.1"/>
</dbReference>
<dbReference type="SMR" id="O21329"/>
<dbReference type="GeneID" id="808132"/>
<dbReference type="KEGG" id="dnm:808132"/>
<dbReference type="CTD" id="4509"/>
<dbReference type="HOGENOM" id="CLU_2811757_0_0_1"/>
<dbReference type="OMA" id="LDTSTWF"/>
<dbReference type="GO" id="GO:0031966">
    <property type="term" value="C:mitochondrial membrane"/>
    <property type="evidence" value="ECO:0007669"/>
    <property type="project" value="UniProtKB-SubCell"/>
</dbReference>
<dbReference type="GO" id="GO:0045259">
    <property type="term" value="C:proton-transporting ATP synthase complex"/>
    <property type="evidence" value="ECO:0000250"/>
    <property type="project" value="UniProtKB"/>
</dbReference>
<dbReference type="GO" id="GO:0015078">
    <property type="term" value="F:proton transmembrane transporter activity"/>
    <property type="evidence" value="ECO:0007669"/>
    <property type="project" value="InterPro"/>
</dbReference>
<dbReference type="GO" id="GO:0015986">
    <property type="term" value="P:proton motive force-driven ATP synthesis"/>
    <property type="evidence" value="ECO:0007669"/>
    <property type="project" value="InterPro"/>
</dbReference>
<dbReference type="InterPro" id="IPR039017">
    <property type="entry name" value="ATP8_mammal"/>
</dbReference>
<dbReference type="InterPro" id="IPR001421">
    <property type="entry name" value="ATP8_metazoa"/>
</dbReference>
<dbReference type="PANTHER" id="PTHR13722">
    <property type="entry name" value="ATP SYNTHASE PROTEIN 8"/>
    <property type="match status" value="1"/>
</dbReference>
<dbReference type="PANTHER" id="PTHR13722:SF0">
    <property type="entry name" value="ATP SYNTHASE PROTEIN 8"/>
    <property type="match status" value="1"/>
</dbReference>
<dbReference type="Pfam" id="PF00895">
    <property type="entry name" value="ATP-synt_8"/>
    <property type="match status" value="1"/>
</dbReference>
<comment type="function">
    <text evidence="1 3">Subunit 8, of the mitochondrial membrane ATP synthase complex (F(1)F(0) ATP synthase or Complex V) that produces ATP from ADP in the presence of a proton gradient across the membrane which is generated by electron transport complexes of the respiratory chain. ATP synthase complex consist of a soluble F(1) head domain - the catalytic core - and a membrane F(1) domain - the membrane proton channel. These two domains are linked by a central stalk rotating inside the F(1) region and a stationary peripheral stalk. During catalysis, ATP synthesis in the catalytic domain of F(1) is coupled via a rotary mechanism of the central stalk subunits to proton translocation (By similarity). In vivo, can only synthesize ATP although its ATP hydrolase activity can be activated artificially in vitro (By similarity). Part of the complex F(0) domain (By similarity).</text>
</comment>
<comment type="subunit">
    <text evidence="1">Component of the ATP synthase complex composed at least of ATP5F1A/subunit alpha, ATP5F1B/subunit beta, ATP5MC1/subunit c (homooctomer), MT-ATP6/subunit a, MT-ATP8/subunit 8, ATP5ME/subunit e, ATP5MF/subunit f, ATP5MG/subunit g, ATP5MK/subunit k, ATP5MJ/subunit j, ATP5F1C/subunit gamma, ATP5F1D/subunit delta, ATP5F1E/subunit epsilon, ATP5PF/subunit F6, ATP5PB/subunit b, ATP5PD/subunit d, ATP5PO/subunit OSCP. ATP synthase complex consists of a soluble F(1) head domain (subunits alpha(3) and beta(3)) - the catalytic core - and a membrane F(0) domain - the membrane proton channel (subunits c, a, 8, e, f, g, k and j). These two domains are linked by a central stalk (subunits gamma, delta, and epsilon) rotating inside the F1 region and a stationary peripheral stalk (subunits F6, b, d, and OSCP). Interacts with PRICKLE3.</text>
</comment>
<comment type="subcellular location">
    <subcellularLocation>
        <location>Mitochondrion membrane</location>
        <topology>Single-pass membrane protein</topology>
    </subcellularLocation>
</comment>
<comment type="similarity">
    <text evidence="5">Belongs to the ATPase protein 8 family.</text>
</comment>
<gene>
    <name evidence="1" type="primary">MT-ATP8</name>
    <name type="synonym">ATP8</name>
    <name type="synonym">ATPASE8</name>
    <name type="synonym">MTATP8</name>
</gene>
<proteinExistence type="inferred from homology"/>
<evidence type="ECO:0000250" key="1">
    <source>
        <dbReference type="UniProtKB" id="P03928"/>
    </source>
</evidence>
<evidence type="ECO:0000250" key="2">
    <source>
        <dbReference type="UniProtKB" id="P03930"/>
    </source>
</evidence>
<evidence type="ECO:0000250" key="3">
    <source>
        <dbReference type="UniProtKB" id="P19483"/>
    </source>
</evidence>
<evidence type="ECO:0000255" key="4"/>
<evidence type="ECO:0000305" key="5"/>
<organism>
    <name type="scientific">Dasypus novemcinctus</name>
    <name type="common">Nine-banded armadillo</name>
    <dbReference type="NCBI Taxonomy" id="9361"/>
    <lineage>
        <taxon>Eukaryota</taxon>
        <taxon>Metazoa</taxon>
        <taxon>Chordata</taxon>
        <taxon>Craniata</taxon>
        <taxon>Vertebrata</taxon>
        <taxon>Euteleostomi</taxon>
        <taxon>Mammalia</taxon>
        <taxon>Eutheria</taxon>
        <taxon>Xenarthra</taxon>
        <taxon>Cingulata</taxon>
        <taxon>Dasypodidae</taxon>
        <taxon>Dasypus</taxon>
    </lineage>
</organism>
<geneLocation type="mitochondrion"/>
<name>ATP8_DASNO</name>
<protein>
    <recommendedName>
        <fullName evidence="1">ATP synthase F(0) complex subunit 8</fullName>
    </recommendedName>
    <alternativeName>
        <fullName>A6L</fullName>
    </alternativeName>
    <alternativeName>
        <fullName>F-ATPase subunit 8</fullName>
    </alternativeName>
</protein>